<sequence length="278" mass="32389">MLTSRALRIPRKPFVDLDYARHMPSAYVERTKRTVPRKVFGDRFGAPDIKMYYVHPDDYVPSHRRPWEDKQISSHLHRSDKYFSAQLSNQYFNLRRPKSERMADTEWTFFPGDLVQVMVGKDKGRQGLVLTTSRDSSDVIVDGLHTKLGEDMEGSEKLGVDKTLRWQEQPLSVSKKQVMLVDPNDEQPCEARWQLNGPGDEYIRVSTRSGYEIPIPSQAKVTYEYLQPENYIEVEGKDTPADAVLERTYMPKVASFEQEIMEEMGIKEERTPKPTFWY</sequence>
<keyword id="KW-0496">Mitochondrion</keyword>
<keyword id="KW-1185">Reference proteome</keyword>
<keyword id="KW-0687">Ribonucleoprotein</keyword>
<keyword id="KW-0689">Ribosomal protein</keyword>
<keyword id="KW-0809">Transit peptide</keyword>
<reference key="1">
    <citation type="journal article" date="1998" name="Science">
        <title>Genome sequence of the nematode C. elegans: a platform for investigating biology.</title>
        <authorList>
            <consortium name="The C. elegans sequencing consortium"/>
        </authorList>
    </citation>
    <scope>NUCLEOTIDE SEQUENCE [LARGE SCALE GENOMIC DNA]</scope>
    <source>
        <strain>Bristol N2</strain>
    </source>
</reference>
<protein>
    <recommendedName>
        <fullName evidence="3">Large ribosomal subunit protein uL24m</fullName>
    </recommendedName>
    <alternativeName>
        <fullName evidence="3">39S ribosomal protein L24, mitochondrial</fullName>
        <shortName>L24mt</shortName>
        <shortName>MRP-L24</shortName>
    </alternativeName>
</protein>
<dbReference type="EMBL" id="FO080462">
    <property type="protein sequence ID" value="CCD63897.1"/>
    <property type="molecule type" value="Genomic_DNA"/>
</dbReference>
<dbReference type="PIR" id="T29904">
    <property type="entry name" value="T29904"/>
</dbReference>
<dbReference type="RefSeq" id="NP_491613.1">
    <property type="nucleotide sequence ID" value="NM_059212.6"/>
</dbReference>
<dbReference type="SMR" id="P91353"/>
<dbReference type="BioGRID" id="37662">
    <property type="interactions" value="7"/>
</dbReference>
<dbReference type="DIP" id="DIP-24452N"/>
<dbReference type="FunCoup" id="P91353">
    <property type="interactions" value="1925"/>
</dbReference>
<dbReference type="IntAct" id="P91353">
    <property type="interactions" value="2"/>
</dbReference>
<dbReference type="STRING" id="6239.F59A3.3.1"/>
<dbReference type="PaxDb" id="6239-F59A3.3"/>
<dbReference type="PeptideAtlas" id="P91353"/>
<dbReference type="EnsemblMetazoa" id="F59A3.3.1">
    <property type="protein sequence ID" value="F59A3.3.1"/>
    <property type="gene ID" value="WBGene00019076"/>
</dbReference>
<dbReference type="GeneID" id="172204"/>
<dbReference type="KEGG" id="cel:CELE_F59A3.3"/>
<dbReference type="UCSC" id="F59A3.3">
    <property type="organism name" value="c. elegans"/>
</dbReference>
<dbReference type="AGR" id="WB:WBGene00019076"/>
<dbReference type="CTD" id="172204"/>
<dbReference type="WormBase" id="F59A3.3">
    <property type="protein sequence ID" value="CE11420"/>
    <property type="gene ID" value="WBGene00019076"/>
    <property type="gene designation" value="mrpl-24"/>
</dbReference>
<dbReference type="eggNOG" id="KOG1708">
    <property type="taxonomic scope" value="Eukaryota"/>
</dbReference>
<dbReference type="GeneTree" id="ENSGT00390000014542"/>
<dbReference type="HOGENOM" id="CLU_998548_0_0_1"/>
<dbReference type="InParanoid" id="P91353"/>
<dbReference type="OMA" id="WTLHPDD"/>
<dbReference type="OrthoDB" id="262547at2759"/>
<dbReference type="PhylomeDB" id="P91353"/>
<dbReference type="Reactome" id="R-CEL-5389840">
    <property type="pathway name" value="Mitochondrial translation elongation"/>
</dbReference>
<dbReference type="Reactome" id="R-CEL-5419276">
    <property type="pathway name" value="Mitochondrial translation termination"/>
</dbReference>
<dbReference type="PRO" id="PR:P91353"/>
<dbReference type="Proteomes" id="UP000001940">
    <property type="component" value="Chromosome I"/>
</dbReference>
<dbReference type="Bgee" id="WBGene00019076">
    <property type="expression patterns" value="Expressed in pharyngeal muscle cell (C elegans) and 4 other cell types or tissues"/>
</dbReference>
<dbReference type="GO" id="GO:0005739">
    <property type="term" value="C:mitochondrion"/>
    <property type="evidence" value="ECO:0000318"/>
    <property type="project" value="GO_Central"/>
</dbReference>
<dbReference type="GO" id="GO:1990904">
    <property type="term" value="C:ribonucleoprotein complex"/>
    <property type="evidence" value="ECO:0007669"/>
    <property type="project" value="UniProtKB-KW"/>
</dbReference>
<dbReference type="GO" id="GO:0005840">
    <property type="term" value="C:ribosome"/>
    <property type="evidence" value="ECO:0007669"/>
    <property type="project" value="UniProtKB-KW"/>
</dbReference>
<dbReference type="GO" id="GO:0003723">
    <property type="term" value="F:RNA binding"/>
    <property type="evidence" value="ECO:0007669"/>
    <property type="project" value="InterPro"/>
</dbReference>
<dbReference type="GO" id="GO:0003735">
    <property type="term" value="F:structural constituent of ribosome"/>
    <property type="evidence" value="ECO:0007669"/>
    <property type="project" value="InterPro"/>
</dbReference>
<dbReference type="GO" id="GO:0006412">
    <property type="term" value="P:translation"/>
    <property type="evidence" value="ECO:0000318"/>
    <property type="project" value="GO_Central"/>
</dbReference>
<dbReference type="CDD" id="cd06089">
    <property type="entry name" value="KOW_RPL26"/>
    <property type="match status" value="1"/>
</dbReference>
<dbReference type="FunFam" id="2.30.30.30:FF:000088">
    <property type="entry name" value="Probable 39S ribosomal protein L24, mitochondrial"/>
    <property type="match status" value="1"/>
</dbReference>
<dbReference type="Gene3D" id="2.30.30.30">
    <property type="match status" value="1"/>
</dbReference>
<dbReference type="InterPro" id="IPR005824">
    <property type="entry name" value="KOW"/>
</dbReference>
<dbReference type="InterPro" id="IPR014722">
    <property type="entry name" value="Rib_uL2_dom2"/>
</dbReference>
<dbReference type="InterPro" id="IPR003256">
    <property type="entry name" value="Ribosomal_uL24"/>
</dbReference>
<dbReference type="InterPro" id="IPR005825">
    <property type="entry name" value="Ribosomal_uL24_CS"/>
</dbReference>
<dbReference type="InterPro" id="IPR041988">
    <property type="entry name" value="Ribosomal_uL24_KOW"/>
</dbReference>
<dbReference type="InterPro" id="IPR008991">
    <property type="entry name" value="Translation_prot_SH3-like_sf"/>
</dbReference>
<dbReference type="PANTHER" id="PTHR12903">
    <property type="entry name" value="MITOCHONDRIAL RIBOSOMAL PROTEIN L24"/>
    <property type="match status" value="1"/>
</dbReference>
<dbReference type="Pfam" id="PF00467">
    <property type="entry name" value="KOW"/>
    <property type="match status" value="1"/>
</dbReference>
<dbReference type="SMART" id="SM00739">
    <property type="entry name" value="KOW"/>
    <property type="match status" value="1"/>
</dbReference>
<dbReference type="SUPFAM" id="SSF50104">
    <property type="entry name" value="Translation proteins SH3-like domain"/>
    <property type="match status" value="1"/>
</dbReference>
<dbReference type="PROSITE" id="PS01108">
    <property type="entry name" value="RIBOSOMAL_L24"/>
    <property type="match status" value="1"/>
</dbReference>
<feature type="transit peptide" description="Mitochondrion" evidence="2">
    <location>
        <begin position="1"/>
        <end status="unknown"/>
    </location>
</feature>
<feature type="chain" id="PRO_0000270494" description="Large ribosomal subunit protein uL24m">
    <location>
        <begin status="unknown"/>
        <end position="278"/>
    </location>
</feature>
<feature type="domain" description="KOW">
    <location>
        <begin position="109"/>
        <end position="142"/>
    </location>
</feature>
<evidence type="ECO:0000250" key="1"/>
<evidence type="ECO:0000255" key="2"/>
<evidence type="ECO:0000305" key="3"/>
<gene>
    <name type="primary">mrpl-24</name>
    <name type="ORF">F59A3.3</name>
</gene>
<comment type="subcellular location">
    <subcellularLocation>
        <location evidence="1">Mitochondrion</location>
    </subcellularLocation>
</comment>
<comment type="similarity">
    <text evidence="3">Belongs to the universal ribosomal protein uL24 family.</text>
</comment>
<organism>
    <name type="scientific">Caenorhabditis elegans</name>
    <dbReference type="NCBI Taxonomy" id="6239"/>
    <lineage>
        <taxon>Eukaryota</taxon>
        <taxon>Metazoa</taxon>
        <taxon>Ecdysozoa</taxon>
        <taxon>Nematoda</taxon>
        <taxon>Chromadorea</taxon>
        <taxon>Rhabditida</taxon>
        <taxon>Rhabditina</taxon>
        <taxon>Rhabditomorpha</taxon>
        <taxon>Rhabditoidea</taxon>
        <taxon>Rhabditidae</taxon>
        <taxon>Peloderinae</taxon>
        <taxon>Caenorhabditis</taxon>
    </lineage>
</organism>
<accession>P91353</accession>
<proteinExistence type="inferred from homology"/>
<name>RM24_CAEEL</name>